<evidence type="ECO:0000255" key="1"/>
<evidence type="ECO:0000255" key="2">
    <source>
        <dbReference type="HAMAP-Rule" id="MF_01260"/>
    </source>
</evidence>
<dbReference type="EC" id="3.1.1.85" evidence="2"/>
<dbReference type="EMBL" id="CP000644">
    <property type="protein sequence ID" value="ABO92039.1"/>
    <property type="molecule type" value="Genomic_DNA"/>
</dbReference>
<dbReference type="RefSeq" id="WP_005319797.1">
    <property type="nucleotide sequence ID" value="NC_009348.1"/>
</dbReference>
<dbReference type="SMR" id="A4ST17"/>
<dbReference type="STRING" id="29491.GCA_000820065_03455"/>
<dbReference type="ESTHER" id="aers4-bioh">
    <property type="family name" value="BioH"/>
</dbReference>
<dbReference type="KEGG" id="asa:ASA_4098"/>
<dbReference type="eggNOG" id="COG0596">
    <property type="taxonomic scope" value="Bacteria"/>
</dbReference>
<dbReference type="HOGENOM" id="CLU_020336_12_2_6"/>
<dbReference type="UniPathway" id="UPA00078"/>
<dbReference type="Proteomes" id="UP000000225">
    <property type="component" value="Chromosome"/>
</dbReference>
<dbReference type="GO" id="GO:0005737">
    <property type="term" value="C:cytoplasm"/>
    <property type="evidence" value="ECO:0007669"/>
    <property type="project" value="UniProtKB-SubCell"/>
</dbReference>
<dbReference type="GO" id="GO:0090499">
    <property type="term" value="F:pimelyl-[acyl-carrier protein] methyl ester esterase activity"/>
    <property type="evidence" value="ECO:0007669"/>
    <property type="project" value="UniProtKB-EC"/>
</dbReference>
<dbReference type="GO" id="GO:0009102">
    <property type="term" value="P:biotin biosynthetic process"/>
    <property type="evidence" value="ECO:0007669"/>
    <property type="project" value="UniProtKB-UniRule"/>
</dbReference>
<dbReference type="Gene3D" id="3.40.50.1820">
    <property type="entry name" value="alpha/beta hydrolase"/>
    <property type="match status" value="1"/>
</dbReference>
<dbReference type="HAMAP" id="MF_01260">
    <property type="entry name" value="Carboxylester"/>
    <property type="match status" value="1"/>
</dbReference>
<dbReference type="InterPro" id="IPR000073">
    <property type="entry name" value="AB_hydrolase_1"/>
</dbReference>
<dbReference type="InterPro" id="IPR029058">
    <property type="entry name" value="AB_hydrolase_fold"/>
</dbReference>
<dbReference type="InterPro" id="IPR010076">
    <property type="entry name" value="BioH"/>
</dbReference>
<dbReference type="InterPro" id="IPR050228">
    <property type="entry name" value="Carboxylesterase_BioH"/>
</dbReference>
<dbReference type="NCBIfam" id="TIGR01738">
    <property type="entry name" value="bioH"/>
    <property type="match status" value="1"/>
</dbReference>
<dbReference type="PANTHER" id="PTHR43194">
    <property type="entry name" value="HYDROLASE ALPHA/BETA FOLD FAMILY"/>
    <property type="match status" value="1"/>
</dbReference>
<dbReference type="PANTHER" id="PTHR43194:SF5">
    <property type="entry name" value="PIMELOYL-[ACYL-CARRIER PROTEIN] METHYL ESTER ESTERASE"/>
    <property type="match status" value="1"/>
</dbReference>
<dbReference type="Pfam" id="PF00561">
    <property type="entry name" value="Abhydrolase_1"/>
    <property type="match status" value="1"/>
</dbReference>
<dbReference type="PRINTS" id="PR00111">
    <property type="entry name" value="ABHYDROLASE"/>
</dbReference>
<dbReference type="SUPFAM" id="SSF53474">
    <property type="entry name" value="alpha/beta-Hydrolases"/>
    <property type="match status" value="1"/>
</dbReference>
<keyword id="KW-0093">Biotin biosynthesis</keyword>
<keyword id="KW-0963">Cytoplasm</keyword>
<keyword id="KW-0378">Hydrolase</keyword>
<keyword id="KW-0719">Serine esterase</keyword>
<name>BIOH_AERS4</name>
<proteinExistence type="inferred from homology"/>
<sequence length="254" mass="28173">MSVSVERFGQGPDLVLLHGWGMNGAVWHGIAQQLAAHYRLHLVDLPGFGNSPLREGSDYSLPWLAEQIAIVLPQKCHLLGWSLGGLVASQLALTQPERLHSLITVASSPCFMARDEWPGIAPKVLTGFNQMLAGDFRQTIERFLAIQAMGSEHARDDIRQLRHWLAERPAPQFAALEAGLGLLADVDLRDELLQLSLPWLRVYGRLDSLVPKASIALLDERYPASHSVVLEKASHAPFISHPQQFVEIVRYFVG</sequence>
<accession>A4ST17</accession>
<comment type="function">
    <text evidence="2">The physiological role of BioH is to remove the methyl group introduced by BioC when the pimeloyl moiety is complete. It allows to synthesize pimeloyl-ACP via the fatty acid synthetic pathway through the hydrolysis of the ester bonds of pimeloyl-ACP esters.</text>
</comment>
<comment type="catalytic activity">
    <reaction evidence="2">
        <text>6-carboxyhexanoyl-[ACP] methyl ester + H2O = 6-carboxyhexanoyl-[ACP] + methanol + H(+)</text>
        <dbReference type="Rhea" id="RHEA:42700"/>
        <dbReference type="Rhea" id="RHEA-COMP:9955"/>
        <dbReference type="Rhea" id="RHEA-COMP:10186"/>
        <dbReference type="ChEBI" id="CHEBI:15377"/>
        <dbReference type="ChEBI" id="CHEBI:15378"/>
        <dbReference type="ChEBI" id="CHEBI:17790"/>
        <dbReference type="ChEBI" id="CHEBI:78846"/>
        <dbReference type="ChEBI" id="CHEBI:82735"/>
        <dbReference type="EC" id="3.1.1.85"/>
    </reaction>
</comment>
<comment type="pathway">
    <text evidence="2">Cofactor biosynthesis; biotin biosynthesis.</text>
</comment>
<comment type="subunit">
    <text evidence="2">Monomer.</text>
</comment>
<comment type="subcellular location">
    <subcellularLocation>
        <location evidence="2">Cytoplasm</location>
    </subcellularLocation>
</comment>
<comment type="similarity">
    <text evidence="2">Belongs to the AB hydrolase superfamily. Carboxylesterase BioH family.</text>
</comment>
<feature type="chain" id="PRO_1000214123" description="Pimeloyl-[acyl-carrier protein] methyl ester esterase">
    <location>
        <begin position="1"/>
        <end position="254"/>
    </location>
</feature>
<feature type="domain" description="AB hydrolase-1" evidence="1">
    <location>
        <begin position="14"/>
        <end position="242"/>
    </location>
</feature>
<feature type="active site" description="Nucleophile" evidence="2">
    <location>
        <position position="82"/>
    </location>
</feature>
<feature type="active site" evidence="2">
    <location>
        <position position="207"/>
    </location>
</feature>
<feature type="active site" evidence="2">
    <location>
        <position position="235"/>
    </location>
</feature>
<feature type="binding site" evidence="2">
    <location>
        <position position="20"/>
    </location>
    <ligand>
        <name>substrate</name>
    </ligand>
</feature>
<feature type="binding site" evidence="2">
    <location>
        <begin position="82"/>
        <end position="83"/>
    </location>
    <ligand>
        <name>substrate</name>
    </ligand>
</feature>
<feature type="binding site" evidence="2">
    <location>
        <begin position="143"/>
        <end position="147"/>
    </location>
    <ligand>
        <name>substrate</name>
    </ligand>
</feature>
<feature type="binding site" evidence="2">
    <location>
        <position position="235"/>
    </location>
    <ligand>
        <name>substrate</name>
    </ligand>
</feature>
<protein>
    <recommendedName>
        <fullName evidence="2">Pimeloyl-[acyl-carrier protein] methyl ester esterase</fullName>
        <ecNumber evidence="2">3.1.1.85</ecNumber>
    </recommendedName>
    <alternativeName>
        <fullName evidence="2">Biotin synthesis protein BioH</fullName>
    </alternativeName>
    <alternativeName>
        <fullName evidence="2">Carboxylesterase BioH</fullName>
    </alternativeName>
</protein>
<reference key="1">
    <citation type="journal article" date="2008" name="BMC Genomics">
        <title>The genome of Aeromonas salmonicida subsp. salmonicida A449: insights into the evolution of a fish pathogen.</title>
        <authorList>
            <person name="Reith M.E."/>
            <person name="Singh R.K."/>
            <person name="Curtis B."/>
            <person name="Boyd J.M."/>
            <person name="Bouevitch A."/>
            <person name="Kimball J."/>
            <person name="Munholland J."/>
            <person name="Murphy C."/>
            <person name="Sarty D."/>
            <person name="Williams J."/>
            <person name="Nash J.H."/>
            <person name="Johnson S.C."/>
            <person name="Brown L.L."/>
        </authorList>
    </citation>
    <scope>NUCLEOTIDE SEQUENCE [LARGE SCALE GENOMIC DNA]</scope>
    <source>
        <strain>A449</strain>
    </source>
</reference>
<organism>
    <name type="scientific">Aeromonas salmonicida (strain A449)</name>
    <dbReference type="NCBI Taxonomy" id="382245"/>
    <lineage>
        <taxon>Bacteria</taxon>
        <taxon>Pseudomonadati</taxon>
        <taxon>Pseudomonadota</taxon>
        <taxon>Gammaproteobacteria</taxon>
        <taxon>Aeromonadales</taxon>
        <taxon>Aeromonadaceae</taxon>
        <taxon>Aeromonas</taxon>
    </lineage>
</organism>
<gene>
    <name evidence="2" type="primary">bioH</name>
    <name type="ordered locus">ASA_4098</name>
</gene>